<keyword id="KW-0028">Amino-acid biosynthesis</keyword>
<keyword id="KW-0963">Cytoplasm</keyword>
<keyword id="KW-0368">Histidine biosynthesis</keyword>
<keyword id="KW-0456">Lyase</keyword>
<keyword id="KW-1185">Reference proteome</keyword>
<feature type="chain" id="PRO_1000148928" description="Imidazole glycerol phosphate synthase subunit HisF">
    <location>
        <begin position="1"/>
        <end position="268"/>
    </location>
</feature>
<feature type="active site" evidence="1">
    <location>
        <position position="12"/>
    </location>
</feature>
<feature type="active site" evidence="1">
    <location>
        <position position="131"/>
    </location>
</feature>
<comment type="function">
    <text evidence="1">IGPS catalyzes the conversion of PRFAR and glutamine to IGP, AICAR and glutamate. The HisF subunit catalyzes the cyclization activity that produces IGP and AICAR from PRFAR using the ammonia provided by the HisH subunit.</text>
</comment>
<comment type="catalytic activity">
    <reaction evidence="1">
        <text>5-[(5-phospho-1-deoxy-D-ribulos-1-ylimino)methylamino]-1-(5-phospho-beta-D-ribosyl)imidazole-4-carboxamide + L-glutamine = D-erythro-1-(imidazol-4-yl)glycerol 3-phosphate + 5-amino-1-(5-phospho-beta-D-ribosyl)imidazole-4-carboxamide + L-glutamate + H(+)</text>
        <dbReference type="Rhea" id="RHEA:24793"/>
        <dbReference type="ChEBI" id="CHEBI:15378"/>
        <dbReference type="ChEBI" id="CHEBI:29985"/>
        <dbReference type="ChEBI" id="CHEBI:58278"/>
        <dbReference type="ChEBI" id="CHEBI:58359"/>
        <dbReference type="ChEBI" id="CHEBI:58475"/>
        <dbReference type="ChEBI" id="CHEBI:58525"/>
        <dbReference type="EC" id="4.3.2.10"/>
    </reaction>
</comment>
<comment type="pathway">
    <text evidence="1">Amino-acid biosynthesis; L-histidine biosynthesis; L-histidine from 5-phospho-alpha-D-ribose 1-diphosphate: step 5/9.</text>
</comment>
<comment type="subunit">
    <text evidence="1">Heterodimer of HisH and HisF.</text>
</comment>
<comment type="subcellular location">
    <subcellularLocation>
        <location evidence="1">Cytoplasm</location>
    </subcellularLocation>
</comment>
<comment type="similarity">
    <text evidence="1">Belongs to the HisA/HisF family.</text>
</comment>
<reference key="1">
    <citation type="journal article" date="2015" name="Genome Announc.">
        <title>Complete Genome Sequence of Methanosphaerula palustris E1-9CT, a Hydrogenotrophic Methanogen Isolated from a Minerotrophic Fen Peatland.</title>
        <authorList>
            <person name="Cadillo-Quiroz H."/>
            <person name="Browne P."/>
            <person name="Kyrpides N."/>
            <person name="Woyke T."/>
            <person name="Goodwin L."/>
            <person name="Detter C."/>
            <person name="Yavitt J.B."/>
            <person name="Zinder S.H."/>
        </authorList>
    </citation>
    <scope>NUCLEOTIDE SEQUENCE [LARGE SCALE GENOMIC DNA]</scope>
    <source>
        <strain>ATCC BAA-1556 / DSM 19958 / E1-9c</strain>
    </source>
</reference>
<evidence type="ECO:0000255" key="1">
    <source>
        <dbReference type="HAMAP-Rule" id="MF_01013"/>
    </source>
</evidence>
<gene>
    <name evidence="1" type="primary">hisF</name>
    <name type="ordered locus">Mpal_0568</name>
</gene>
<dbReference type="EC" id="4.3.2.10" evidence="1"/>
<dbReference type="EMBL" id="CP001338">
    <property type="protein sequence ID" value="ACL15940.1"/>
    <property type="molecule type" value="Genomic_DNA"/>
</dbReference>
<dbReference type="RefSeq" id="WP_012617259.1">
    <property type="nucleotide sequence ID" value="NC_011832.1"/>
</dbReference>
<dbReference type="SMR" id="B8GEX3"/>
<dbReference type="STRING" id="521011.Mpal_0568"/>
<dbReference type="GeneID" id="7270152"/>
<dbReference type="KEGG" id="mpl:Mpal_0568"/>
<dbReference type="eggNOG" id="arCOG00617">
    <property type="taxonomic scope" value="Archaea"/>
</dbReference>
<dbReference type="HOGENOM" id="CLU_048577_4_0_2"/>
<dbReference type="OrthoDB" id="6261at2157"/>
<dbReference type="UniPathway" id="UPA00031">
    <property type="reaction ID" value="UER00010"/>
</dbReference>
<dbReference type="Proteomes" id="UP000002457">
    <property type="component" value="Chromosome"/>
</dbReference>
<dbReference type="GO" id="GO:0005737">
    <property type="term" value="C:cytoplasm"/>
    <property type="evidence" value="ECO:0007669"/>
    <property type="project" value="UniProtKB-SubCell"/>
</dbReference>
<dbReference type="GO" id="GO:0000107">
    <property type="term" value="F:imidazoleglycerol-phosphate synthase activity"/>
    <property type="evidence" value="ECO:0007669"/>
    <property type="project" value="UniProtKB-UniRule"/>
</dbReference>
<dbReference type="GO" id="GO:0016829">
    <property type="term" value="F:lyase activity"/>
    <property type="evidence" value="ECO:0007669"/>
    <property type="project" value="UniProtKB-KW"/>
</dbReference>
<dbReference type="GO" id="GO:0000105">
    <property type="term" value="P:L-histidine biosynthetic process"/>
    <property type="evidence" value="ECO:0007669"/>
    <property type="project" value="UniProtKB-UniRule"/>
</dbReference>
<dbReference type="CDD" id="cd04731">
    <property type="entry name" value="HisF"/>
    <property type="match status" value="1"/>
</dbReference>
<dbReference type="FunFam" id="3.20.20.70:FF:000006">
    <property type="entry name" value="Imidazole glycerol phosphate synthase subunit HisF"/>
    <property type="match status" value="1"/>
</dbReference>
<dbReference type="Gene3D" id="3.20.20.70">
    <property type="entry name" value="Aldolase class I"/>
    <property type="match status" value="1"/>
</dbReference>
<dbReference type="HAMAP" id="MF_01013">
    <property type="entry name" value="HisF"/>
    <property type="match status" value="1"/>
</dbReference>
<dbReference type="InterPro" id="IPR013785">
    <property type="entry name" value="Aldolase_TIM"/>
</dbReference>
<dbReference type="InterPro" id="IPR006062">
    <property type="entry name" value="His_biosynth"/>
</dbReference>
<dbReference type="InterPro" id="IPR004651">
    <property type="entry name" value="HisF"/>
</dbReference>
<dbReference type="InterPro" id="IPR050064">
    <property type="entry name" value="IGPS_HisA/HisF"/>
</dbReference>
<dbReference type="InterPro" id="IPR011060">
    <property type="entry name" value="RibuloseP-bd_barrel"/>
</dbReference>
<dbReference type="NCBIfam" id="TIGR00735">
    <property type="entry name" value="hisF"/>
    <property type="match status" value="1"/>
</dbReference>
<dbReference type="PANTHER" id="PTHR21235:SF2">
    <property type="entry name" value="IMIDAZOLE GLYCEROL PHOSPHATE SYNTHASE HISHF"/>
    <property type="match status" value="1"/>
</dbReference>
<dbReference type="PANTHER" id="PTHR21235">
    <property type="entry name" value="IMIDAZOLE GLYCEROL PHOSPHATE SYNTHASE SUBUNIT HISF/H IGP SYNTHASE SUBUNIT HISF/H"/>
    <property type="match status" value="1"/>
</dbReference>
<dbReference type="Pfam" id="PF00977">
    <property type="entry name" value="His_biosynth"/>
    <property type="match status" value="1"/>
</dbReference>
<dbReference type="SUPFAM" id="SSF51366">
    <property type="entry name" value="Ribulose-phoshate binding barrel"/>
    <property type="match status" value="1"/>
</dbReference>
<proteinExistence type="inferred from homology"/>
<protein>
    <recommendedName>
        <fullName evidence="1">Imidazole glycerol phosphate synthase subunit HisF</fullName>
        <ecNumber evidence="1">4.3.2.10</ecNumber>
    </recommendedName>
    <alternativeName>
        <fullName evidence="1">IGP synthase cyclase subunit</fullName>
    </alternativeName>
    <alternativeName>
        <fullName evidence="1">IGP synthase subunit HisF</fullName>
    </alternativeName>
    <alternativeName>
        <fullName evidence="1">ImGP synthase subunit HisF</fullName>
        <shortName evidence="1">IGPS subunit HisF</shortName>
    </alternativeName>
</protein>
<organism>
    <name type="scientific">Methanosphaerula palustris (strain ATCC BAA-1556 / DSM 19958 / E1-9c)</name>
    <dbReference type="NCBI Taxonomy" id="521011"/>
    <lineage>
        <taxon>Archaea</taxon>
        <taxon>Methanobacteriati</taxon>
        <taxon>Methanobacteriota</taxon>
        <taxon>Stenosarchaea group</taxon>
        <taxon>Methanomicrobia</taxon>
        <taxon>Methanomicrobiales</taxon>
        <taxon>Methanoregulaceae</taxon>
        <taxon>Methanosphaerula</taxon>
    </lineage>
</organism>
<sequence length="268" mass="28339">MVLTKRIIPCLDLKDGRVVKGTHFVDLRDAGDPVELAERYNEQGADEVVFLDITASKEQRGAILSVISRAADQLFLPLTVGGGIRTIDDIQQLLRAGADKVSINTSAIKDPSLISDGAVRFGNQCIVVAVDVRRSTAANPDATVIHLPDGTTCWYEVVIYGGSTPTGIDAVRWVQDAEERGAGEILLTSMETDGTKNGFDLAITAAVSDAVSIPVIASGGVGTLADFYDGVTAGKADACLAASVFHYGEFTVRDVKTYLAGRGVPVRL</sequence>
<accession>B8GEX3</accession>
<name>HIS6_METPE</name>